<gene>
    <name evidence="1" type="primary">glmM</name>
    <name type="ordered locus">Mnod_4549</name>
</gene>
<organism>
    <name type="scientific">Methylobacterium nodulans (strain LMG 21967 / CNCM I-2342 / ORS 2060)</name>
    <dbReference type="NCBI Taxonomy" id="460265"/>
    <lineage>
        <taxon>Bacteria</taxon>
        <taxon>Pseudomonadati</taxon>
        <taxon>Pseudomonadota</taxon>
        <taxon>Alphaproteobacteria</taxon>
        <taxon>Hyphomicrobiales</taxon>
        <taxon>Methylobacteriaceae</taxon>
        <taxon>Methylobacterium</taxon>
    </lineage>
</organism>
<comment type="function">
    <text evidence="1">Catalyzes the conversion of glucosamine-6-phosphate to glucosamine-1-phosphate.</text>
</comment>
<comment type="catalytic activity">
    <reaction evidence="1">
        <text>alpha-D-glucosamine 1-phosphate = D-glucosamine 6-phosphate</text>
        <dbReference type="Rhea" id="RHEA:23424"/>
        <dbReference type="ChEBI" id="CHEBI:58516"/>
        <dbReference type="ChEBI" id="CHEBI:58725"/>
        <dbReference type="EC" id="5.4.2.10"/>
    </reaction>
</comment>
<comment type="cofactor">
    <cofactor evidence="1">
        <name>Mg(2+)</name>
        <dbReference type="ChEBI" id="CHEBI:18420"/>
    </cofactor>
    <text evidence="1">Binds 1 Mg(2+) ion per subunit.</text>
</comment>
<comment type="PTM">
    <text evidence="1">Activated by phosphorylation.</text>
</comment>
<comment type="similarity">
    <text evidence="1">Belongs to the phosphohexose mutase family.</text>
</comment>
<proteinExistence type="inferred from homology"/>
<reference key="1">
    <citation type="submission" date="2009-01" db="EMBL/GenBank/DDBJ databases">
        <title>Complete sequence of chromosome of Methylobacterium nodulans ORS 2060.</title>
        <authorList>
            <consortium name="US DOE Joint Genome Institute"/>
            <person name="Lucas S."/>
            <person name="Copeland A."/>
            <person name="Lapidus A."/>
            <person name="Glavina del Rio T."/>
            <person name="Dalin E."/>
            <person name="Tice H."/>
            <person name="Bruce D."/>
            <person name="Goodwin L."/>
            <person name="Pitluck S."/>
            <person name="Sims D."/>
            <person name="Brettin T."/>
            <person name="Detter J.C."/>
            <person name="Han C."/>
            <person name="Larimer F."/>
            <person name="Land M."/>
            <person name="Hauser L."/>
            <person name="Kyrpides N."/>
            <person name="Ivanova N."/>
            <person name="Marx C.J."/>
            <person name="Richardson P."/>
        </authorList>
    </citation>
    <scope>NUCLEOTIDE SEQUENCE [LARGE SCALE GENOMIC DNA]</scope>
    <source>
        <strain>LMG 21967 / CNCM I-2342 / ORS 2060</strain>
    </source>
</reference>
<accession>B8ID24</accession>
<keyword id="KW-0413">Isomerase</keyword>
<keyword id="KW-0460">Magnesium</keyword>
<keyword id="KW-0479">Metal-binding</keyword>
<keyword id="KW-0597">Phosphoprotein</keyword>
<keyword id="KW-1185">Reference proteome</keyword>
<name>GLMM_METNO</name>
<evidence type="ECO:0000255" key="1">
    <source>
        <dbReference type="HAMAP-Rule" id="MF_01554"/>
    </source>
</evidence>
<feature type="chain" id="PRO_1000185374" description="Phosphoglucosamine mutase">
    <location>
        <begin position="1"/>
        <end position="446"/>
    </location>
</feature>
<feature type="active site" description="Phosphoserine intermediate" evidence="1">
    <location>
        <position position="100"/>
    </location>
</feature>
<feature type="binding site" description="via phosphate group" evidence="1">
    <location>
        <position position="100"/>
    </location>
    <ligand>
        <name>Mg(2+)</name>
        <dbReference type="ChEBI" id="CHEBI:18420"/>
    </ligand>
</feature>
<feature type="binding site" evidence="1">
    <location>
        <position position="241"/>
    </location>
    <ligand>
        <name>Mg(2+)</name>
        <dbReference type="ChEBI" id="CHEBI:18420"/>
    </ligand>
</feature>
<feature type="binding site" evidence="1">
    <location>
        <position position="243"/>
    </location>
    <ligand>
        <name>Mg(2+)</name>
        <dbReference type="ChEBI" id="CHEBI:18420"/>
    </ligand>
</feature>
<feature type="binding site" evidence="1">
    <location>
        <position position="245"/>
    </location>
    <ligand>
        <name>Mg(2+)</name>
        <dbReference type="ChEBI" id="CHEBI:18420"/>
    </ligand>
</feature>
<feature type="modified residue" description="Phosphoserine" evidence="1">
    <location>
        <position position="100"/>
    </location>
</feature>
<protein>
    <recommendedName>
        <fullName evidence="1">Phosphoglucosamine mutase</fullName>
        <ecNumber evidence="1">5.4.2.10</ecNumber>
    </recommendedName>
</protein>
<dbReference type="EC" id="5.4.2.10" evidence="1"/>
<dbReference type="EMBL" id="CP001349">
    <property type="protein sequence ID" value="ACL59416.1"/>
    <property type="molecule type" value="Genomic_DNA"/>
</dbReference>
<dbReference type="RefSeq" id="WP_015931054.1">
    <property type="nucleotide sequence ID" value="NC_011894.1"/>
</dbReference>
<dbReference type="SMR" id="B8ID24"/>
<dbReference type="STRING" id="460265.Mnod_4549"/>
<dbReference type="KEGG" id="mno:Mnod_4549"/>
<dbReference type="eggNOG" id="COG1109">
    <property type="taxonomic scope" value="Bacteria"/>
</dbReference>
<dbReference type="HOGENOM" id="CLU_016950_7_0_5"/>
<dbReference type="OrthoDB" id="9803322at2"/>
<dbReference type="Proteomes" id="UP000008207">
    <property type="component" value="Chromosome"/>
</dbReference>
<dbReference type="GO" id="GO:0005829">
    <property type="term" value="C:cytosol"/>
    <property type="evidence" value="ECO:0007669"/>
    <property type="project" value="TreeGrafter"/>
</dbReference>
<dbReference type="GO" id="GO:0000287">
    <property type="term" value="F:magnesium ion binding"/>
    <property type="evidence" value="ECO:0007669"/>
    <property type="project" value="UniProtKB-UniRule"/>
</dbReference>
<dbReference type="GO" id="GO:0008966">
    <property type="term" value="F:phosphoglucosamine mutase activity"/>
    <property type="evidence" value="ECO:0007669"/>
    <property type="project" value="UniProtKB-UniRule"/>
</dbReference>
<dbReference type="GO" id="GO:0004615">
    <property type="term" value="F:phosphomannomutase activity"/>
    <property type="evidence" value="ECO:0007669"/>
    <property type="project" value="TreeGrafter"/>
</dbReference>
<dbReference type="GO" id="GO:0005975">
    <property type="term" value="P:carbohydrate metabolic process"/>
    <property type="evidence" value="ECO:0007669"/>
    <property type="project" value="InterPro"/>
</dbReference>
<dbReference type="GO" id="GO:0009252">
    <property type="term" value="P:peptidoglycan biosynthetic process"/>
    <property type="evidence" value="ECO:0007669"/>
    <property type="project" value="TreeGrafter"/>
</dbReference>
<dbReference type="GO" id="GO:0006048">
    <property type="term" value="P:UDP-N-acetylglucosamine biosynthetic process"/>
    <property type="evidence" value="ECO:0007669"/>
    <property type="project" value="TreeGrafter"/>
</dbReference>
<dbReference type="CDD" id="cd05802">
    <property type="entry name" value="GlmM"/>
    <property type="match status" value="1"/>
</dbReference>
<dbReference type="FunFam" id="3.30.310.50:FF:000001">
    <property type="entry name" value="Phosphoglucosamine mutase"/>
    <property type="match status" value="1"/>
</dbReference>
<dbReference type="FunFam" id="3.40.120.10:FF:000001">
    <property type="entry name" value="Phosphoglucosamine mutase"/>
    <property type="match status" value="1"/>
</dbReference>
<dbReference type="FunFam" id="3.40.120.10:FF:000002">
    <property type="entry name" value="Phosphoglucosamine mutase"/>
    <property type="match status" value="1"/>
</dbReference>
<dbReference type="Gene3D" id="3.40.120.10">
    <property type="entry name" value="Alpha-D-Glucose-1,6-Bisphosphate, subunit A, domain 3"/>
    <property type="match status" value="3"/>
</dbReference>
<dbReference type="Gene3D" id="3.30.310.50">
    <property type="entry name" value="Alpha-D-phosphohexomutase, C-terminal domain"/>
    <property type="match status" value="1"/>
</dbReference>
<dbReference type="HAMAP" id="MF_01554_B">
    <property type="entry name" value="GlmM_B"/>
    <property type="match status" value="1"/>
</dbReference>
<dbReference type="InterPro" id="IPR005844">
    <property type="entry name" value="A-D-PHexomutase_a/b/a-I"/>
</dbReference>
<dbReference type="InterPro" id="IPR016055">
    <property type="entry name" value="A-D-PHexomutase_a/b/a-I/II/III"/>
</dbReference>
<dbReference type="InterPro" id="IPR005845">
    <property type="entry name" value="A-D-PHexomutase_a/b/a-II"/>
</dbReference>
<dbReference type="InterPro" id="IPR005846">
    <property type="entry name" value="A-D-PHexomutase_a/b/a-III"/>
</dbReference>
<dbReference type="InterPro" id="IPR005843">
    <property type="entry name" value="A-D-PHexomutase_C"/>
</dbReference>
<dbReference type="InterPro" id="IPR036900">
    <property type="entry name" value="A-D-PHexomutase_C_sf"/>
</dbReference>
<dbReference type="InterPro" id="IPR016066">
    <property type="entry name" value="A-D-PHexomutase_CS"/>
</dbReference>
<dbReference type="InterPro" id="IPR005841">
    <property type="entry name" value="Alpha-D-phosphohexomutase_SF"/>
</dbReference>
<dbReference type="InterPro" id="IPR006352">
    <property type="entry name" value="GlmM_bact"/>
</dbReference>
<dbReference type="InterPro" id="IPR050060">
    <property type="entry name" value="Phosphoglucosamine_mutase"/>
</dbReference>
<dbReference type="NCBIfam" id="TIGR01455">
    <property type="entry name" value="glmM"/>
    <property type="match status" value="1"/>
</dbReference>
<dbReference type="NCBIfam" id="NF008139">
    <property type="entry name" value="PRK10887.1"/>
    <property type="match status" value="1"/>
</dbReference>
<dbReference type="PANTHER" id="PTHR42946:SF1">
    <property type="entry name" value="PHOSPHOGLUCOMUTASE (ALPHA-D-GLUCOSE-1,6-BISPHOSPHATE-DEPENDENT)"/>
    <property type="match status" value="1"/>
</dbReference>
<dbReference type="PANTHER" id="PTHR42946">
    <property type="entry name" value="PHOSPHOHEXOSE MUTASE"/>
    <property type="match status" value="1"/>
</dbReference>
<dbReference type="Pfam" id="PF02878">
    <property type="entry name" value="PGM_PMM_I"/>
    <property type="match status" value="1"/>
</dbReference>
<dbReference type="Pfam" id="PF02879">
    <property type="entry name" value="PGM_PMM_II"/>
    <property type="match status" value="1"/>
</dbReference>
<dbReference type="Pfam" id="PF02880">
    <property type="entry name" value="PGM_PMM_III"/>
    <property type="match status" value="1"/>
</dbReference>
<dbReference type="Pfam" id="PF00408">
    <property type="entry name" value="PGM_PMM_IV"/>
    <property type="match status" value="1"/>
</dbReference>
<dbReference type="PRINTS" id="PR00509">
    <property type="entry name" value="PGMPMM"/>
</dbReference>
<dbReference type="SUPFAM" id="SSF55957">
    <property type="entry name" value="Phosphoglucomutase, C-terminal domain"/>
    <property type="match status" value="1"/>
</dbReference>
<dbReference type="SUPFAM" id="SSF53738">
    <property type="entry name" value="Phosphoglucomutase, first 3 domains"/>
    <property type="match status" value="3"/>
</dbReference>
<dbReference type="PROSITE" id="PS00710">
    <property type="entry name" value="PGM_PMM"/>
    <property type="match status" value="1"/>
</dbReference>
<sequence>MRKYFGTDGIRGRANGVITPELALKVGQAAGLLFQRGEYRHRVVIGKDTRLSGYMIETALVAGFTSVGMDVLLLGPMPTPAVAMLTRSMRADLGVMISASHNPYEDNGIKLFGPDGFKLSDEVEHEIERLIDSDLQKRLSASADLGRAKRIESVHARYIEFAKRTLPRNITLDGLRVVVDCANGAAYRVAPETLWELGAEVIAIGTEPDGFNINRDVGSTAPDALVRKVRELRADIGIALDGDADRVLVVDEKGQRVDGDQLMAVVARSWKEDERLTQPGIVATIMSNLGLERYLGGLGLSLVRTAVGDRYVLEHMREHGYNLGGEQSGHIIMSDYATTGDGLVAALQLLTVVQRQKRPVSEVCHCFDPLPQVLKNVRYGAGEPLRKDSVVTAIEGARQRLGNAGRLVIRPSGTEPVIRVMAEGDDRDLVVEVVDEVVEALRKAAA</sequence>